<feature type="chain" id="PRO_0000141313" description="Cobyric acid synthase">
    <location>
        <begin position="1"/>
        <end position="520"/>
    </location>
</feature>
<feature type="domain" description="GATase cobBQ-type" evidence="1">
    <location>
        <begin position="257"/>
        <end position="451"/>
    </location>
</feature>
<feature type="active site" description="Nucleophile" evidence="1">
    <location>
        <position position="338"/>
    </location>
</feature>
<feature type="active site" evidence="1">
    <location>
        <position position="443"/>
    </location>
</feature>
<evidence type="ECO:0000255" key="1">
    <source>
        <dbReference type="HAMAP-Rule" id="MF_00028"/>
    </source>
</evidence>
<protein>
    <recommendedName>
        <fullName evidence="1">Cobyric acid synthase</fullName>
    </recommendedName>
</protein>
<accession>Q5YSA4</accession>
<keyword id="KW-0169">Cobalamin biosynthesis</keyword>
<keyword id="KW-0315">Glutamine amidotransferase</keyword>
<keyword id="KW-1185">Reference proteome</keyword>
<name>COBQ_NOCFA</name>
<dbReference type="EMBL" id="AP006618">
    <property type="protein sequence ID" value="BAD58937.1"/>
    <property type="molecule type" value="Genomic_DNA"/>
</dbReference>
<dbReference type="RefSeq" id="WP_011210622.1">
    <property type="nucleotide sequence ID" value="NC_006361.1"/>
</dbReference>
<dbReference type="SMR" id="Q5YSA4"/>
<dbReference type="STRING" id="247156.NFA_40880"/>
<dbReference type="GeneID" id="61134730"/>
<dbReference type="KEGG" id="nfa:NFA_40880"/>
<dbReference type="eggNOG" id="COG1492">
    <property type="taxonomic scope" value="Bacteria"/>
</dbReference>
<dbReference type="HOGENOM" id="CLU_019250_2_2_11"/>
<dbReference type="OrthoDB" id="9808302at2"/>
<dbReference type="UniPathway" id="UPA00148"/>
<dbReference type="Proteomes" id="UP000006820">
    <property type="component" value="Chromosome"/>
</dbReference>
<dbReference type="GO" id="GO:0015420">
    <property type="term" value="F:ABC-type vitamin B12 transporter activity"/>
    <property type="evidence" value="ECO:0007669"/>
    <property type="project" value="UniProtKB-UniRule"/>
</dbReference>
<dbReference type="GO" id="GO:0003824">
    <property type="term" value="F:catalytic activity"/>
    <property type="evidence" value="ECO:0007669"/>
    <property type="project" value="InterPro"/>
</dbReference>
<dbReference type="GO" id="GO:0009236">
    <property type="term" value="P:cobalamin biosynthetic process"/>
    <property type="evidence" value="ECO:0007669"/>
    <property type="project" value="UniProtKB-UniRule"/>
</dbReference>
<dbReference type="CDD" id="cd05389">
    <property type="entry name" value="CobQ_N"/>
    <property type="match status" value="1"/>
</dbReference>
<dbReference type="CDD" id="cd01750">
    <property type="entry name" value="GATase1_CobQ"/>
    <property type="match status" value="1"/>
</dbReference>
<dbReference type="Gene3D" id="3.40.50.880">
    <property type="match status" value="1"/>
</dbReference>
<dbReference type="Gene3D" id="3.40.50.300">
    <property type="entry name" value="P-loop containing nucleotide triphosphate hydrolases"/>
    <property type="match status" value="1"/>
</dbReference>
<dbReference type="HAMAP" id="MF_00028">
    <property type="entry name" value="CobQ"/>
    <property type="match status" value="1"/>
</dbReference>
<dbReference type="InterPro" id="IPR029062">
    <property type="entry name" value="Class_I_gatase-like"/>
</dbReference>
<dbReference type="InterPro" id="IPR002586">
    <property type="entry name" value="CobQ/CobB/MinD/ParA_Nub-bd_dom"/>
</dbReference>
<dbReference type="InterPro" id="IPR033949">
    <property type="entry name" value="CobQ_GATase1"/>
</dbReference>
<dbReference type="InterPro" id="IPR047045">
    <property type="entry name" value="CobQ_N"/>
</dbReference>
<dbReference type="InterPro" id="IPR004459">
    <property type="entry name" value="CobQ_synth"/>
</dbReference>
<dbReference type="InterPro" id="IPR011698">
    <property type="entry name" value="GATase_3"/>
</dbReference>
<dbReference type="InterPro" id="IPR027417">
    <property type="entry name" value="P-loop_NTPase"/>
</dbReference>
<dbReference type="NCBIfam" id="TIGR00313">
    <property type="entry name" value="cobQ"/>
    <property type="match status" value="1"/>
</dbReference>
<dbReference type="NCBIfam" id="NF001989">
    <property type="entry name" value="PRK00784.1"/>
    <property type="match status" value="1"/>
</dbReference>
<dbReference type="PANTHER" id="PTHR21343:SF1">
    <property type="entry name" value="COBYRIC ACID SYNTHASE"/>
    <property type="match status" value="1"/>
</dbReference>
<dbReference type="PANTHER" id="PTHR21343">
    <property type="entry name" value="DETHIOBIOTIN SYNTHETASE"/>
    <property type="match status" value="1"/>
</dbReference>
<dbReference type="Pfam" id="PF01656">
    <property type="entry name" value="CbiA"/>
    <property type="match status" value="1"/>
</dbReference>
<dbReference type="Pfam" id="PF07685">
    <property type="entry name" value="GATase_3"/>
    <property type="match status" value="1"/>
</dbReference>
<dbReference type="SUPFAM" id="SSF52317">
    <property type="entry name" value="Class I glutamine amidotransferase-like"/>
    <property type="match status" value="1"/>
</dbReference>
<dbReference type="SUPFAM" id="SSF52540">
    <property type="entry name" value="P-loop containing nucleoside triphosphate hydrolases"/>
    <property type="match status" value="1"/>
</dbReference>
<dbReference type="PROSITE" id="PS51274">
    <property type="entry name" value="GATASE_COBBQ"/>
    <property type="match status" value="1"/>
</dbReference>
<organism>
    <name type="scientific">Nocardia farcinica (strain IFM 10152)</name>
    <dbReference type="NCBI Taxonomy" id="247156"/>
    <lineage>
        <taxon>Bacteria</taxon>
        <taxon>Bacillati</taxon>
        <taxon>Actinomycetota</taxon>
        <taxon>Actinomycetes</taxon>
        <taxon>Mycobacteriales</taxon>
        <taxon>Nocardiaceae</taxon>
        <taxon>Nocardia</taxon>
    </lineage>
</organism>
<comment type="function">
    <text evidence="1">Catalyzes amidations at positions B, D, E, and G on adenosylcobyrinic A,C-diamide. NH(2) groups are provided by glutamine, and one molecule of ATP is hydrogenolyzed for each amidation.</text>
</comment>
<comment type="pathway">
    <text evidence="1">Cofactor biosynthesis; adenosylcobalamin biosynthesis.</text>
</comment>
<comment type="similarity">
    <text evidence="1">Belongs to the CobB/CobQ family. CobQ subfamily.</text>
</comment>
<reference key="1">
    <citation type="journal article" date="2004" name="Proc. Natl. Acad. Sci. U.S.A.">
        <title>The complete genomic sequence of Nocardia farcinica IFM 10152.</title>
        <authorList>
            <person name="Ishikawa J."/>
            <person name="Yamashita A."/>
            <person name="Mikami Y."/>
            <person name="Hoshino Y."/>
            <person name="Kurita H."/>
            <person name="Hotta K."/>
            <person name="Shiba T."/>
            <person name="Hattori M."/>
        </authorList>
    </citation>
    <scope>NUCLEOTIDE SEQUENCE [LARGE SCALE GENOMIC DNA]</scope>
    <source>
        <strain>IFM 10152</strain>
    </source>
</reference>
<gene>
    <name evidence="1" type="primary">cobQ</name>
    <name type="ordered locus">NFA_40880</name>
</gene>
<sequence>MKGALLVAGTTSDAGKSVVVAGLCRMLARRGVRVAPFKAQNMSNNSVVTLDGGEIGRAQALQARACGLEPSVRFNPVLLKPGSDRRSQLVVRGQAVDTVGAADYFRHRTALREVVAAELASLRAEFDVVLCEGAGSPAEINLRATDLANMGLARAADLPVLVVGDIDRGGVLAHLFGTVAVLEPDDQRLIAGFVVNKFRGDVDLLRPGLDRLAELTGRPTLGVLPFAEELWLDAEDSLGTVADAPVGRPRPPVGTEWLTVAAVRLPRISNSTDVEALACEPGVAVRWVSEPSRLADADLVVVPGSKSTVSDLAWLRRTGLGEALRARVTAGRPVLAICGGYQMLGRRIVDEVESGAGEVAGLGVFDLETEFAAPKVLRRVTGMGAGNPVRGYEIHHGRVRRSGDAPWLGLVDAPEAAVDGGEDAVPLTPEGSVTGGAWGTHVHGLLESDGFRRAWLREVAARAGRHGFQVAPDTSVAAVRAGQLDLLADLVEKHLDQDALERILTDGAPTGLPVLTVGQA</sequence>
<proteinExistence type="inferred from homology"/>